<keyword id="KW-0067">ATP-binding</keyword>
<keyword id="KW-0963">Cytoplasm</keyword>
<keyword id="KW-0275">Fatty acid biosynthesis</keyword>
<keyword id="KW-0276">Fatty acid metabolism</keyword>
<keyword id="KW-0444">Lipid biosynthesis</keyword>
<keyword id="KW-0443">Lipid metabolism</keyword>
<keyword id="KW-0479">Metal-binding</keyword>
<keyword id="KW-0547">Nucleotide-binding</keyword>
<keyword id="KW-0808">Transferase</keyword>
<keyword id="KW-0862">Zinc</keyword>
<keyword id="KW-0863">Zinc-finger</keyword>
<gene>
    <name evidence="1" type="primary">accD1</name>
    <name type="ordered locus">RoseRS_0392</name>
</gene>
<name>ACCD1_ROSS1</name>
<organism>
    <name type="scientific">Roseiflexus sp. (strain RS-1)</name>
    <dbReference type="NCBI Taxonomy" id="357808"/>
    <lineage>
        <taxon>Bacteria</taxon>
        <taxon>Bacillati</taxon>
        <taxon>Chloroflexota</taxon>
        <taxon>Chloroflexia</taxon>
        <taxon>Chloroflexales</taxon>
        <taxon>Roseiflexineae</taxon>
        <taxon>Roseiflexaceae</taxon>
        <taxon>Roseiflexus</taxon>
    </lineage>
</organism>
<comment type="function">
    <text evidence="1">Component of the acetyl coenzyme A carboxylase (ACC) complex. Biotin carboxylase (BC) catalyzes the carboxylation of biotin on its carrier protein (BCCP) and then the CO(2) group is transferred by the transcarboxylase to acetyl-CoA to form malonyl-CoA.</text>
</comment>
<comment type="catalytic activity">
    <reaction evidence="1">
        <text>N(6)-carboxybiotinyl-L-lysyl-[protein] + acetyl-CoA = N(6)-biotinyl-L-lysyl-[protein] + malonyl-CoA</text>
        <dbReference type="Rhea" id="RHEA:54728"/>
        <dbReference type="Rhea" id="RHEA-COMP:10505"/>
        <dbReference type="Rhea" id="RHEA-COMP:10506"/>
        <dbReference type="ChEBI" id="CHEBI:57288"/>
        <dbReference type="ChEBI" id="CHEBI:57384"/>
        <dbReference type="ChEBI" id="CHEBI:83144"/>
        <dbReference type="ChEBI" id="CHEBI:83145"/>
        <dbReference type="EC" id="2.1.3.15"/>
    </reaction>
</comment>
<comment type="cofactor">
    <cofactor evidence="1">
        <name>Zn(2+)</name>
        <dbReference type="ChEBI" id="CHEBI:29105"/>
    </cofactor>
    <text evidence="1">Binds 1 zinc ion per subunit.</text>
</comment>
<comment type="pathway">
    <text evidence="1">Lipid metabolism; malonyl-CoA biosynthesis; malonyl-CoA from acetyl-CoA: step 1/1.</text>
</comment>
<comment type="subunit">
    <text evidence="1">Acetyl-CoA carboxylase is a heterohexamer composed of biotin carboxyl carrier protein (AccB), biotin carboxylase (AccC) and two subunits each of ACCase subunit alpha (AccA) and ACCase subunit beta (AccD).</text>
</comment>
<comment type="subcellular location">
    <subcellularLocation>
        <location evidence="1">Cytoplasm</location>
    </subcellularLocation>
</comment>
<comment type="similarity">
    <text evidence="1">Belongs to the AccD/PCCB family.</text>
</comment>
<sequence>MKDLFRRAPKRFTAARIENQAIPDNMWVKCPSCGDLIYTRQFSDNLKVCKCGYHMRLTAREWLGLLDDGSFVEFDAALASVDALGFVSPRHVYEQKLIESRQQTGLNDALITSSGAINGMLLCLAVTEFEFIGGSMGSAYGERLARVIERAADARLPLLTINASGGARQEEGTLALLQMAKVNMALTRLAAAGQPHIALLVDPCYGGVLASYTSVADVIIAEPGARVGFAGRRVIEQTIRQKLPVHFQTAEFLLDHGMIDMVTPRSELRGVLSTLLRLYRDAFAHTSAAQHVPALTHVQG</sequence>
<protein>
    <recommendedName>
        <fullName evidence="1">Acetyl-coenzyme A carboxylase carboxyl transferase subunit beta 1</fullName>
        <shortName evidence="1">ACCase subunit beta 1</shortName>
        <shortName evidence="1">Acetyl-CoA carboxylase carboxyltransferase subunit beta 1</shortName>
        <ecNumber evidence="1">2.1.3.15</ecNumber>
    </recommendedName>
</protein>
<reference key="1">
    <citation type="submission" date="2007-04" db="EMBL/GenBank/DDBJ databases">
        <title>Complete sequence of Roseiflexus sp. RS-1.</title>
        <authorList>
            <consortium name="US DOE Joint Genome Institute"/>
            <person name="Copeland A."/>
            <person name="Lucas S."/>
            <person name="Lapidus A."/>
            <person name="Barry K."/>
            <person name="Detter J.C."/>
            <person name="Glavina del Rio T."/>
            <person name="Hammon N."/>
            <person name="Israni S."/>
            <person name="Dalin E."/>
            <person name="Tice H."/>
            <person name="Pitluck S."/>
            <person name="Chertkov O."/>
            <person name="Brettin T."/>
            <person name="Bruce D."/>
            <person name="Han C."/>
            <person name="Schmutz J."/>
            <person name="Larimer F."/>
            <person name="Land M."/>
            <person name="Hauser L."/>
            <person name="Kyrpides N."/>
            <person name="Mikhailova N."/>
            <person name="Bryant D.A."/>
            <person name="Richardson P."/>
        </authorList>
    </citation>
    <scope>NUCLEOTIDE SEQUENCE [LARGE SCALE GENOMIC DNA]</scope>
    <source>
        <strain>RS-1</strain>
    </source>
</reference>
<evidence type="ECO:0000255" key="1">
    <source>
        <dbReference type="HAMAP-Rule" id="MF_01395"/>
    </source>
</evidence>
<evidence type="ECO:0000255" key="2">
    <source>
        <dbReference type="PROSITE-ProRule" id="PRU01136"/>
    </source>
</evidence>
<accession>A5UQC0</accession>
<proteinExistence type="inferred from homology"/>
<feature type="chain" id="PRO_0000389842" description="Acetyl-coenzyme A carboxylase carboxyl transferase subunit beta 1">
    <location>
        <begin position="1"/>
        <end position="300"/>
    </location>
</feature>
<feature type="domain" description="CoA carboxyltransferase N-terminal" evidence="2">
    <location>
        <begin position="26"/>
        <end position="294"/>
    </location>
</feature>
<feature type="zinc finger region" description="C4-type" evidence="1">
    <location>
        <begin position="30"/>
        <end position="51"/>
    </location>
</feature>
<feature type="binding site" evidence="1">
    <location>
        <position position="30"/>
    </location>
    <ligand>
        <name>Zn(2+)</name>
        <dbReference type="ChEBI" id="CHEBI:29105"/>
    </ligand>
</feature>
<feature type="binding site" evidence="1">
    <location>
        <position position="33"/>
    </location>
    <ligand>
        <name>Zn(2+)</name>
        <dbReference type="ChEBI" id="CHEBI:29105"/>
    </ligand>
</feature>
<feature type="binding site" evidence="1">
    <location>
        <position position="49"/>
    </location>
    <ligand>
        <name>Zn(2+)</name>
        <dbReference type="ChEBI" id="CHEBI:29105"/>
    </ligand>
</feature>
<feature type="binding site" evidence="1">
    <location>
        <position position="51"/>
    </location>
    <ligand>
        <name>Zn(2+)</name>
        <dbReference type="ChEBI" id="CHEBI:29105"/>
    </ligand>
</feature>
<dbReference type="EC" id="2.1.3.15" evidence="1"/>
<dbReference type="EMBL" id="CP000686">
    <property type="protein sequence ID" value="ABQ88823.1"/>
    <property type="molecule type" value="Genomic_DNA"/>
</dbReference>
<dbReference type="RefSeq" id="WP_011955180.1">
    <property type="nucleotide sequence ID" value="NC_009523.1"/>
</dbReference>
<dbReference type="SMR" id="A5UQC0"/>
<dbReference type="STRING" id="357808.RoseRS_0392"/>
<dbReference type="KEGG" id="rrs:RoseRS_0392"/>
<dbReference type="eggNOG" id="COG0777">
    <property type="taxonomic scope" value="Bacteria"/>
</dbReference>
<dbReference type="HOGENOM" id="CLU_015486_1_1_0"/>
<dbReference type="OrthoDB" id="9772975at2"/>
<dbReference type="UniPathway" id="UPA00655">
    <property type="reaction ID" value="UER00711"/>
</dbReference>
<dbReference type="Proteomes" id="UP000006554">
    <property type="component" value="Chromosome"/>
</dbReference>
<dbReference type="GO" id="GO:0009317">
    <property type="term" value="C:acetyl-CoA carboxylase complex"/>
    <property type="evidence" value="ECO:0007669"/>
    <property type="project" value="InterPro"/>
</dbReference>
<dbReference type="GO" id="GO:0003989">
    <property type="term" value="F:acetyl-CoA carboxylase activity"/>
    <property type="evidence" value="ECO:0007669"/>
    <property type="project" value="InterPro"/>
</dbReference>
<dbReference type="GO" id="GO:0005524">
    <property type="term" value="F:ATP binding"/>
    <property type="evidence" value="ECO:0007669"/>
    <property type="project" value="UniProtKB-KW"/>
</dbReference>
<dbReference type="GO" id="GO:0016743">
    <property type="term" value="F:carboxyl- or carbamoyltransferase activity"/>
    <property type="evidence" value="ECO:0007669"/>
    <property type="project" value="UniProtKB-UniRule"/>
</dbReference>
<dbReference type="GO" id="GO:0008270">
    <property type="term" value="F:zinc ion binding"/>
    <property type="evidence" value="ECO:0007669"/>
    <property type="project" value="UniProtKB-UniRule"/>
</dbReference>
<dbReference type="GO" id="GO:0006633">
    <property type="term" value="P:fatty acid biosynthetic process"/>
    <property type="evidence" value="ECO:0007669"/>
    <property type="project" value="UniProtKB-KW"/>
</dbReference>
<dbReference type="GO" id="GO:2001295">
    <property type="term" value="P:malonyl-CoA biosynthetic process"/>
    <property type="evidence" value="ECO:0007669"/>
    <property type="project" value="UniProtKB-UniRule"/>
</dbReference>
<dbReference type="Gene3D" id="3.90.226.10">
    <property type="entry name" value="2-enoyl-CoA Hydratase, Chain A, domain 1"/>
    <property type="match status" value="1"/>
</dbReference>
<dbReference type="HAMAP" id="MF_01395">
    <property type="entry name" value="AcetylCoA_CT_beta"/>
    <property type="match status" value="1"/>
</dbReference>
<dbReference type="InterPro" id="IPR034733">
    <property type="entry name" value="AcCoA_carboxyl_beta"/>
</dbReference>
<dbReference type="InterPro" id="IPR000438">
    <property type="entry name" value="Acetyl_CoA_COase_Trfase_b_su"/>
</dbReference>
<dbReference type="InterPro" id="IPR029045">
    <property type="entry name" value="ClpP/crotonase-like_dom_sf"/>
</dbReference>
<dbReference type="InterPro" id="IPR011762">
    <property type="entry name" value="COA_CT_N"/>
</dbReference>
<dbReference type="InterPro" id="IPR041010">
    <property type="entry name" value="Znf-ACC"/>
</dbReference>
<dbReference type="PANTHER" id="PTHR42995">
    <property type="entry name" value="ACETYL-COENZYME A CARBOXYLASE CARBOXYL TRANSFERASE SUBUNIT BETA, CHLOROPLASTIC"/>
    <property type="match status" value="1"/>
</dbReference>
<dbReference type="PANTHER" id="PTHR42995:SF5">
    <property type="entry name" value="ACETYL-COENZYME A CARBOXYLASE CARBOXYL TRANSFERASE SUBUNIT BETA, CHLOROPLASTIC"/>
    <property type="match status" value="1"/>
</dbReference>
<dbReference type="Pfam" id="PF01039">
    <property type="entry name" value="Carboxyl_trans"/>
    <property type="match status" value="1"/>
</dbReference>
<dbReference type="Pfam" id="PF17848">
    <property type="entry name" value="Zn_ribbon_ACC"/>
    <property type="match status" value="1"/>
</dbReference>
<dbReference type="PRINTS" id="PR01070">
    <property type="entry name" value="ACCCTRFRASEB"/>
</dbReference>
<dbReference type="SUPFAM" id="SSF52096">
    <property type="entry name" value="ClpP/crotonase"/>
    <property type="match status" value="1"/>
</dbReference>
<dbReference type="PROSITE" id="PS50980">
    <property type="entry name" value="COA_CT_NTER"/>
    <property type="match status" value="1"/>
</dbReference>